<feature type="chain" id="PRO_1000048958" description="Large ribosomal subunit protein bL20">
    <location>
        <begin position="1"/>
        <end position="119"/>
    </location>
</feature>
<gene>
    <name evidence="1" type="primary">rplT</name>
    <name type="ordered locus">CBO3135</name>
    <name type="ordered locus">CLC_3038</name>
</gene>
<organism>
    <name type="scientific">Clostridium botulinum (strain Hall / ATCC 3502 / NCTC 13319 / Type A)</name>
    <dbReference type="NCBI Taxonomy" id="441771"/>
    <lineage>
        <taxon>Bacteria</taxon>
        <taxon>Bacillati</taxon>
        <taxon>Bacillota</taxon>
        <taxon>Clostridia</taxon>
        <taxon>Eubacteriales</taxon>
        <taxon>Clostridiaceae</taxon>
        <taxon>Clostridium</taxon>
    </lineage>
</organism>
<evidence type="ECO:0000255" key="1">
    <source>
        <dbReference type="HAMAP-Rule" id="MF_00382"/>
    </source>
</evidence>
<evidence type="ECO:0000305" key="2"/>
<accession>A5I6L5</accession>
<accession>A7G7U9</accession>
<keyword id="KW-1185">Reference proteome</keyword>
<keyword id="KW-0687">Ribonucleoprotein</keyword>
<keyword id="KW-0689">Ribosomal protein</keyword>
<keyword id="KW-0694">RNA-binding</keyword>
<keyword id="KW-0699">rRNA-binding</keyword>
<dbReference type="EMBL" id="CP000727">
    <property type="protein sequence ID" value="ABS38895.1"/>
    <property type="molecule type" value="Genomic_DNA"/>
</dbReference>
<dbReference type="EMBL" id="AM412317">
    <property type="protein sequence ID" value="CAL84697.1"/>
    <property type="molecule type" value="Genomic_DNA"/>
</dbReference>
<dbReference type="RefSeq" id="WP_003386545.1">
    <property type="nucleotide sequence ID" value="NC_009698.1"/>
</dbReference>
<dbReference type="RefSeq" id="YP_001255625.1">
    <property type="nucleotide sequence ID" value="NC_009495.1"/>
</dbReference>
<dbReference type="RefSeq" id="YP_001388864.1">
    <property type="nucleotide sequence ID" value="NC_009698.1"/>
</dbReference>
<dbReference type="SMR" id="A5I6L5"/>
<dbReference type="GeneID" id="92939856"/>
<dbReference type="KEGG" id="cbh:CLC_3038"/>
<dbReference type="KEGG" id="cbo:CBO3135"/>
<dbReference type="PATRIC" id="fig|413999.7.peg.3114"/>
<dbReference type="HOGENOM" id="CLU_123265_0_1_9"/>
<dbReference type="PRO" id="PR:A5I6L5"/>
<dbReference type="Proteomes" id="UP000001986">
    <property type="component" value="Chromosome"/>
</dbReference>
<dbReference type="GO" id="GO:0022625">
    <property type="term" value="C:cytosolic large ribosomal subunit"/>
    <property type="evidence" value="ECO:0000318"/>
    <property type="project" value="GO_Central"/>
</dbReference>
<dbReference type="GO" id="GO:0019843">
    <property type="term" value="F:rRNA binding"/>
    <property type="evidence" value="ECO:0007669"/>
    <property type="project" value="UniProtKB-UniRule"/>
</dbReference>
<dbReference type="GO" id="GO:0003735">
    <property type="term" value="F:structural constituent of ribosome"/>
    <property type="evidence" value="ECO:0000318"/>
    <property type="project" value="GO_Central"/>
</dbReference>
<dbReference type="GO" id="GO:0000027">
    <property type="term" value="P:ribosomal large subunit assembly"/>
    <property type="evidence" value="ECO:0007669"/>
    <property type="project" value="UniProtKB-UniRule"/>
</dbReference>
<dbReference type="GO" id="GO:0006412">
    <property type="term" value="P:translation"/>
    <property type="evidence" value="ECO:0007669"/>
    <property type="project" value="InterPro"/>
</dbReference>
<dbReference type="CDD" id="cd07026">
    <property type="entry name" value="Ribosomal_L20"/>
    <property type="match status" value="1"/>
</dbReference>
<dbReference type="FunFam" id="1.10.1900.20:FF:000001">
    <property type="entry name" value="50S ribosomal protein L20"/>
    <property type="match status" value="1"/>
</dbReference>
<dbReference type="Gene3D" id="6.10.160.10">
    <property type="match status" value="1"/>
</dbReference>
<dbReference type="Gene3D" id="1.10.1900.20">
    <property type="entry name" value="Ribosomal protein L20"/>
    <property type="match status" value="1"/>
</dbReference>
<dbReference type="HAMAP" id="MF_00382">
    <property type="entry name" value="Ribosomal_bL20"/>
    <property type="match status" value="1"/>
</dbReference>
<dbReference type="InterPro" id="IPR005813">
    <property type="entry name" value="Ribosomal_bL20"/>
</dbReference>
<dbReference type="InterPro" id="IPR049946">
    <property type="entry name" value="RIBOSOMAL_L20_CS"/>
</dbReference>
<dbReference type="InterPro" id="IPR035566">
    <property type="entry name" value="Ribosomal_protein_bL20_C"/>
</dbReference>
<dbReference type="NCBIfam" id="TIGR01032">
    <property type="entry name" value="rplT_bact"/>
    <property type="match status" value="1"/>
</dbReference>
<dbReference type="PANTHER" id="PTHR10986">
    <property type="entry name" value="39S RIBOSOMAL PROTEIN L20"/>
    <property type="match status" value="1"/>
</dbReference>
<dbReference type="Pfam" id="PF00453">
    <property type="entry name" value="Ribosomal_L20"/>
    <property type="match status" value="1"/>
</dbReference>
<dbReference type="PRINTS" id="PR00062">
    <property type="entry name" value="RIBOSOMALL20"/>
</dbReference>
<dbReference type="SUPFAM" id="SSF74731">
    <property type="entry name" value="Ribosomal protein L20"/>
    <property type="match status" value="1"/>
</dbReference>
<dbReference type="PROSITE" id="PS00937">
    <property type="entry name" value="RIBOSOMAL_L20"/>
    <property type="match status" value="1"/>
</dbReference>
<name>RL20_CLOBH</name>
<proteinExistence type="inferred from homology"/>
<protein>
    <recommendedName>
        <fullName evidence="1">Large ribosomal subunit protein bL20</fullName>
    </recommendedName>
    <alternativeName>
        <fullName evidence="2">50S ribosomal protein L20</fullName>
    </alternativeName>
</protein>
<sequence>MARVKRAMNARKRHKKVLKLAKGYYGGKSKLFKTANESVIRALRNAYVGRKLKKRDYRKLWIARINAATRMNGLSYSKFMNGIKNAGIDINRKMLSEIAINDPKAFAELVDVAKKQLNA</sequence>
<comment type="function">
    <text evidence="1">Binds directly to 23S ribosomal RNA and is necessary for the in vitro assembly process of the 50S ribosomal subunit. It is not involved in the protein synthesizing functions of that subunit.</text>
</comment>
<comment type="similarity">
    <text evidence="1">Belongs to the bacterial ribosomal protein bL20 family.</text>
</comment>
<reference key="1">
    <citation type="journal article" date="2007" name="Genome Res.">
        <title>Genome sequence of a proteolytic (Group I) Clostridium botulinum strain Hall A and comparative analysis of the clostridial genomes.</title>
        <authorList>
            <person name="Sebaihia M."/>
            <person name="Peck M.W."/>
            <person name="Minton N.P."/>
            <person name="Thomson N.R."/>
            <person name="Holden M.T.G."/>
            <person name="Mitchell W.J."/>
            <person name="Carter A.T."/>
            <person name="Bentley S.D."/>
            <person name="Mason D.R."/>
            <person name="Crossman L."/>
            <person name="Paul C.J."/>
            <person name="Ivens A."/>
            <person name="Wells-Bennik M.H.J."/>
            <person name="Davis I.J."/>
            <person name="Cerdeno-Tarraga A.M."/>
            <person name="Churcher C."/>
            <person name="Quail M.A."/>
            <person name="Chillingworth T."/>
            <person name="Feltwell T."/>
            <person name="Fraser A."/>
            <person name="Goodhead I."/>
            <person name="Hance Z."/>
            <person name="Jagels K."/>
            <person name="Larke N."/>
            <person name="Maddison M."/>
            <person name="Moule S."/>
            <person name="Mungall K."/>
            <person name="Norbertczak H."/>
            <person name="Rabbinowitsch E."/>
            <person name="Sanders M."/>
            <person name="Simmonds M."/>
            <person name="White B."/>
            <person name="Whithead S."/>
            <person name="Parkhill J."/>
        </authorList>
    </citation>
    <scope>NUCLEOTIDE SEQUENCE [LARGE SCALE GENOMIC DNA]</scope>
    <source>
        <strain>Hall / ATCC 3502 / NCTC 13319 / Type A</strain>
    </source>
</reference>
<reference key="2">
    <citation type="journal article" date="2007" name="PLoS ONE">
        <title>Analysis of the neurotoxin complex genes in Clostridium botulinum A1-A4 and B1 strains: BoNT/A3, /Ba4 and /B1 clusters are located within plasmids.</title>
        <authorList>
            <person name="Smith T.J."/>
            <person name="Hill K.K."/>
            <person name="Foley B.T."/>
            <person name="Detter J.C."/>
            <person name="Munk A.C."/>
            <person name="Bruce D.C."/>
            <person name="Doggett N.A."/>
            <person name="Smith L.A."/>
            <person name="Marks J.D."/>
            <person name="Xie G."/>
            <person name="Brettin T.S."/>
        </authorList>
    </citation>
    <scope>NUCLEOTIDE SEQUENCE [LARGE SCALE GENOMIC DNA]</scope>
    <source>
        <strain>Hall / ATCC 3502 / NCTC 13319 / Type A</strain>
    </source>
</reference>